<reference key="1">
    <citation type="journal article" date="2005" name="Dev. Biol.">
        <title>LrrA, a novel leucine-rich repeat protein involved in cytoskeleton remodeling, is required for multicellular morphogenesis in Dictyostelium discoideum.</title>
        <authorList>
            <person name="Liu C.-I."/>
            <person name="Cheng T.-L."/>
            <person name="Chen S.-Z."/>
            <person name="Huang Y.-C."/>
            <person name="Chang W.-T."/>
        </authorList>
    </citation>
    <scope>NUCLEOTIDE SEQUENCE [MRNA]</scope>
    <scope>FUNCTION</scope>
    <scope>SUBCELLULAR LOCATION</scope>
    <scope>DEVELOPMENTAL STAGE</scope>
    <scope>DISRUPTION PHENOTYPE</scope>
    <source>
        <strain>AX3-1</strain>
    </source>
</reference>
<reference key="2">
    <citation type="journal article" date="2002" name="Nature">
        <title>Sequence and analysis of chromosome 2 of Dictyostelium discoideum.</title>
        <authorList>
            <person name="Gloeckner G."/>
            <person name="Eichinger L."/>
            <person name="Szafranski K."/>
            <person name="Pachebat J.A."/>
            <person name="Bankier A.T."/>
            <person name="Dear P.H."/>
            <person name="Lehmann R."/>
            <person name="Baumgart C."/>
            <person name="Parra G."/>
            <person name="Abril J.F."/>
            <person name="Guigo R."/>
            <person name="Kumpf K."/>
            <person name="Tunggal B."/>
            <person name="Cox E.C."/>
            <person name="Quail M.A."/>
            <person name="Platzer M."/>
            <person name="Rosenthal A."/>
            <person name="Noegel A.A."/>
        </authorList>
    </citation>
    <scope>NUCLEOTIDE SEQUENCE [LARGE SCALE GENOMIC DNA]</scope>
    <source>
        <strain>AX4</strain>
    </source>
</reference>
<reference key="3">
    <citation type="journal article" date="2005" name="Nature">
        <title>The genome of the social amoeba Dictyostelium discoideum.</title>
        <authorList>
            <person name="Eichinger L."/>
            <person name="Pachebat J.A."/>
            <person name="Gloeckner G."/>
            <person name="Rajandream M.A."/>
            <person name="Sucgang R."/>
            <person name="Berriman M."/>
            <person name="Song J."/>
            <person name="Olsen R."/>
            <person name="Szafranski K."/>
            <person name="Xu Q."/>
            <person name="Tunggal B."/>
            <person name="Kummerfeld S."/>
            <person name="Madera M."/>
            <person name="Konfortov B.A."/>
            <person name="Rivero F."/>
            <person name="Bankier A.T."/>
            <person name="Lehmann R."/>
            <person name="Hamlin N."/>
            <person name="Davies R."/>
            <person name="Gaudet P."/>
            <person name="Fey P."/>
            <person name="Pilcher K."/>
            <person name="Chen G."/>
            <person name="Saunders D."/>
            <person name="Sodergren E.J."/>
            <person name="Davis P."/>
            <person name="Kerhornou A."/>
            <person name="Nie X."/>
            <person name="Hall N."/>
            <person name="Anjard C."/>
            <person name="Hemphill L."/>
            <person name="Bason N."/>
            <person name="Farbrother P."/>
            <person name="Desany B."/>
            <person name="Just E."/>
            <person name="Morio T."/>
            <person name="Rost R."/>
            <person name="Churcher C.M."/>
            <person name="Cooper J."/>
            <person name="Haydock S."/>
            <person name="van Driessche N."/>
            <person name="Cronin A."/>
            <person name="Goodhead I."/>
            <person name="Muzny D.M."/>
            <person name="Mourier T."/>
            <person name="Pain A."/>
            <person name="Lu M."/>
            <person name="Harper D."/>
            <person name="Lindsay R."/>
            <person name="Hauser H."/>
            <person name="James K.D."/>
            <person name="Quiles M."/>
            <person name="Madan Babu M."/>
            <person name="Saito T."/>
            <person name="Buchrieser C."/>
            <person name="Wardroper A."/>
            <person name="Felder M."/>
            <person name="Thangavelu M."/>
            <person name="Johnson D."/>
            <person name="Knights A."/>
            <person name="Loulseged H."/>
            <person name="Mungall K.L."/>
            <person name="Oliver K."/>
            <person name="Price C."/>
            <person name="Quail M.A."/>
            <person name="Urushihara H."/>
            <person name="Hernandez J."/>
            <person name="Rabbinowitsch E."/>
            <person name="Steffen D."/>
            <person name="Sanders M."/>
            <person name="Ma J."/>
            <person name="Kohara Y."/>
            <person name="Sharp S."/>
            <person name="Simmonds M.N."/>
            <person name="Spiegler S."/>
            <person name="Tivey A."/>
            <person name="Sugano S."/>
            <person name="White B."/>
            <person name="Walker D."/>
            <person name="Woodward J.R."/>
            <person name="Winckler T."/>
            <person name="Tanaka Y."/>
            <person name="Shaulsky G."/>
            <person name="Schleicher M."/>
            <person name="Weinstock G.M."/>
            <person name="Rosenthal A."/>
            <person name="Cox E.C."/>
            <person name="Chisholm R.L."/>
            <person name="Gibbs R.A."/>
            <person name="Loomis W.F."/>
            <person name="Platzer M."/>
            <person name="Kay R.R."/>
            <person name="Williams J.G."/>
            <person name="Dear P.H."/>
            <person name="Noegel A.A."/>
            <person name="Barrell B.G."/>
            <person name="Kuspa A."/>
        </authorList>
    </citation>
    <scope>NUCLEOTIDE SEQUENCE [LARGE SCALE GENOMIC DNA]</scope>
    <source>
        <strain>AX4</strain>
    </source>
</reference>
<reference key="4">
    <citation type="journal article" date="2006" name="Mol. Cell. Proteomics">
        <title>Proteomics fingerprinting of phagosome maturation and evidence for the role of a Galpha during uptake.</title>
        <authorList>
            <person name="Gotthardt D."/>
            <person name="Blancheteau V."/>
            <person name="Bosserhoff A."/>
            <person name="Ruppert T."/>
            <person name="Delorenzi M."/>
            <person name="Soldati T."/>
        </authorList>
    </citation>
    <scope>IDENTIFICATION BY MASS SPECTROMETRY [LARGE SCALE ANALYSIS]</scope>
    <source>
        <strain>AX2</strain>
    </source>
</reference>
<organism>
    <name type="scientific">Dictyostelium discoideum</name>
    <name type="common">Social amoeba</name>
    <dbReference type="NCBI Taxonomy" id="44689"/>
    <lineage>
        <taxon>Eukaryota</taxon>
        <taxon>Amoebozoa</taxon>
        <taxon>Evosea</taxon>
        <taxon>Eumycetozoa</taxon>
        <taxon>Dictyostelia</taxon>
        <taxon>Dictyosteliales</taxon>
        <taxon>Dictyosteliaceae</taxon>
        <taxon>Dictyostelium</taxon>
    </lineage>
</organism>
<proteinExistence type="evidence at protein level"/>
<evidence type="ECO:0000269" key="1">
    <source>
    </source>
</evidence>
<gene>
    <name type="primary">lrrA</name>
    <name type="ORF">DDB_G0294094</name>
</gene>
<accession>Q54AX5</accession>
<accession>Q9NIR8</accession>
<dbReference type="EMBL" id="AF200466">
    <property type="protein sequence ID" value="AAF66828.1"/>
    <property type="molecule type" value="mRNA"/>
</dbReference>
<dbReference type="EMBL" id="AAFI02000006">
    <property type="protein sequence ID" value="EAL60413.1"/>
    <property type="molecule type" value="Genomic_DNA"/>
</dbReference>
<dbReference type="RefSeq" id="XP_628849.1">
    <property type="nucleotide sequence ID" value="XM_628847.1"/>
</dbReference>
<dbReference type="SMR" id="Q54AX5"/>
<dbReference type="FunCoup" id="Q54AX5">
    <property type="interactions" value="50"/>
</dbReference>
<dbReference type="STRING" id="44689.Q54AX5"/>
<dbReference type="PaxDb" id="44689-DDB0215361"/>
<dbReference type="EnsemblProtists" id="EAL60413">
    <property type="protein sequence ID" value="EAL60413"/>
    <property type="gene ID" value="DDB_G0294094"/>
</dbReference>
<dbReference type="GeneID" id="8617996"/>
<dbReference type="KEGG" id="ddi:DDB_G0294094"/>
<dbReference type="dictyBase" id="DDB_G0294094">
    <property type="gene designation" value="lrrA"/>
</dbReference>
<dbReference type="VEuPathDB" id="AmoebaDB:DDB_G0294094"/>
<dbReference type="eggNOG" id="KOG0619">
    <property type="taxonomic scope" value="Eukaryota"/>
</dbReference>
<dbReference type="HOGENOM" id="CLU_000288_18_23_1"/>
<dbReference type="InParanoid" id="Q54AX5"/>
<dbReference type="OMA" id="NQFTSYP"/>
<dbReference type="PhylomeDB" id="Q54AX5"/>
<dbReference type="Reactome" id="R-DDI-446388">
    <property type="pathway name" value="Regulation of cytoskeletal remodeling and cell spreading by IPP complex components"/>
</dbReference>
<dbReference type="PRO" id="PR:Q54AX5"/>
<dbReference type="Proteomes" id="UP000002195">
    <property type="component" value="Chromosome 2"/>
</dbReference>
<dbReference type="GO" id="GO:0005737">
    <property type="term" value="C:cytoplasm"/>
    <property type="evidence" value="ECO:0000314"/>
    <property type="project" value="dictyBase"/>
</dbReference>
<dbReference type="GO" id="GO:0045335">
    <property type="term" value="C:phagocytic vesicle"/>
    <property type="evidence" value="ECO:0007005"/>
    <property type="project" value="dictyBase"/>
</dbReference>
<dbReference type="GO" id="GO:0031152">
    <property type="term" value="P:aggregation involved in sorocarp development"/>
    <property type="evidence" value="ECO:0000315"/>
    <property type="project" value="dictyBase"/>
</dbReference>
<dbReference type="GO" id="GO:0098609">
    <property type="term" value="P:cell-cell adhesion"/>
    <property type="evidence" value="ECO:0000315"/>
    <property type="project" value="dictyBase"/>
</dbReference>
<dbReference type="GO" id="GO:0031589">
    <property type="term" value="P:cell-substrate adhesion"/>
    <property type="evidence" value="ECO:0000315"/>
    <property type="project" value="dictyBase"/>
</dbReference>
<dbReference type="GO" id="GO:0043327">
    <property type="term" value="P:chemotaxis to cAMP"/>
    <property type="evidence" value="ECO:0000315"/>
    <property type="project" value="dictyBase"/>
</dbReference>
<dbReference type="GO" id="GO:0043326">
    <property type="term" value="P:chemotaxis to folate"/>
    <property type="evidence" value="ECO:0000315"/>
    <property type="project" value="dictyBase"/>
</dbReference>
<dbReference type="GO" id="GO:0031154">
    <property type="term" value="P:culmination involved in sorocarp development"/>
    <property type="evidence" value="ECO:0000315"/>
    <property type="project" value="dictyBase"/>
</dbReference>
<dbReference type="GO" id="GO:0007163">
    <property type="term" value="P:establishment or maintenance of cell polarity"/>
    <property type="evidence" value="ECO:0000315"/>
    <property type="project" value="dictyBase"/>
</dbReference>
<dbReference type="GO" id="GO:0035556">
    <property type="term" value="P:intracellular signal transduction"/>
    <property type="evidence" value="ECO:0000318"/>
    <property type="project" value="GO_Central"/>
</dbReference>
<dbReference type="GO" id="GO:0030833">
    <property type="term" value="P:regulation of actin filament polymerization"/>
    <property type="evidence" value="ECO:0000315"/>
    <property type="project" value="dictyBase"/>
</dbReference>
<dbReference type="FunFam" id="3.80.10.10:FF:001975">
    <property type="entry name" value="Leucine-rich repeat protein lrrA"/>
    <property type="match status" value="1"/>
</dbReference>
<dbReference type="FunFam" id="3.80.10.10:FF:001983">
    <property type="entry name" value="Leucine-rich repeat protein lrrA"/>
    <property type="match status" value="1"/>
</dbReference>
<dbReference type="Gene3D" id="3.80.10.10">
    <property type="entry name" value="Ribonuclease Inhibitor"/>
    <property type="match status" value="5"/>
</dbReference>
<dbReference type="InterPro" id="IPR001611">
    <property type="entry name" value="Leu-rich_rpt"/>
</dbReference>
<dbReference type="InterPro" id="IPR025875">
    <property type="entry name" value="Leu-rich_rpt_4"/>
</dbReference>
<dbReference type="InterPro" id="IPR003591">
    <property type="entry name" value="Leu-rich_rpt_typical-subtyp"/>
</dbReference>
<dbReference type="InterPro" id="IPR032675">
    <property type="entry name" value="LRR_dom_sf"/>
</dbReference>
<dbReference type="InterPro" id="IPR050216">
    <property type="entry name" value="LRR_domain-containing"/>
</dbReference>
<dbReference type="InterPro" id="IPR055414">
    <property type="entry name" value="LRR_R13L4/SHOC2-like"/>
</dbReference>
<dbReference type="PANTHER" id="PTHR48051">
    <property type="match status" value="1"/>
</dbReference>
<dbReference type="PANTHER" id="PTHR48051:SF1">
    <property type="entry name" value="RAS SUPPRESSOR PROTEIN 1"/>
    <property type="match status" value="1"/>
</dbReference>
<dbReference type="Pfam" id="PF00560">
    <property type="entry name" value="LRR_1"/>
    <property type="match status" value="1"/>
</dbReference>
<dbReference type="Pfam" id="PF23598">
    <property type="entry name" value="LRR_14"/>
    <property type="match status" value="1"/>
</dbReference>
<dbReference type="Pfam" id="PF12799">
    <property type="entry name" value="LRR_4"/>
    <property type="match status" value="1"/>
</dbReference>
<dbReference type="PRINTS" id="PR00019">
    <property type="entry name" value="LEURICHRPT"/>
</dbReference>
<dbReference type="SMART" id="SM00364">
    <property type="entry name" value="LRR_BAC"/>
    <property type="match status" value="7"/>
</dbReference>
<dbReference type="SMART" id="SM00365">
    <property type="entry name" value="LRR_SD22"/>
    <property type="match status" value="5"/>
</dbReference>
<dbReference type="SMART" id="SM00369">
    <property type="entry name" value="LRR_TYP"/>
    <property type="match status" value="14"/>
</dbReference>
<dbReference type="SUPFAM" id="SSF52058">
    <property type="entry name" value="L domain-like"/>
    <property type="match status" value="1"/>
</dbReference>
<dbReference type="SUPFAM" id="SSF52075">
    <property type="entry name" value="Outer arm dynein light chain 1"/>
    <property type="match status" value="1"/>
</dbReference>
<dbReference type="PROSITE" id="PS51450">
    <property type="entry name" value="LRR"/>
    <property type="match status" value="19"/>
</dbReference>
<feature type="chain" id="PRO_0000327867" description="Leucine-rich repeat protein lrrA">
    <location>
        <begin position="1"/>
        <end position="510"/>
    </location>
</feature>
<feature type="repeat" description="LRR 1">
    <location>
        <begin position="14"/>
        <end position="34"/>
    </location>
</feature>
<feature type="repeat" description="LRR 2">
    <location>
        <begin position="35"/>
        <end position="59"/>
    </location>
</feature>
<feature type="repeat" description="LRR 3">
    <location>
        <begin position="60"/>
        <end position="82"/>
    </location>
</feature>
<feature type="repeat" description="LRR 4">
    <location>
        <begin position="84"/>
        <end position="106"/>
    </location>
</feature>
<feature type="repeat" description="LRR 5">
    <location>
        <begin position="107"/>
        <end position="130"/>
    </location>
</feature>
<feature type="repeat" description="LRR 6">
    <location>
        <begin position="132"/>
        <end position="152"/>
    </location>
</feature>
<feature type="repeat" description="LRR 7">
    <location>
        <begin position="153"/>
        <end position="176"/>
    </location>
</feature>
<feature type="repeat" description="LRR 8">
    <location>
        <begin position="177"/>
        <end position="200"/>
    </location>
</feature>
<feature type="repeat" description="LRR 9">
    <location>
        <begin position="202"/>
        <end position="222"/>
    </location>
</feature>
<feature type="repeat" description="LRR 10">
    <location>
        <begin position="224"/>
        <end position="245"/>
    </location>
</feature>
<feature type="repeat" description="LRR 11">
    <location>
        <begin position="246"/>
        <end position="270"/>
    </location>
</feature>
<feature type="repeat" description="LRR 12">
    <location>
        <begin position="272"/>
        <end position="292"/>
    </location>
</feature>
<feature type="repeat" description="LRR 13">
    <location>
        <begin position="293"/>
        <end position="315"/>
    </location>
</feature>
<feature type="repeat" description="LRR 14">
    <location>
        <begin position="316"/>
        <end position="340"/>
    </location>
</feature>
<feature type="repeat" description="LRR 15">
    <location>
        <begin position="341"/>
        <end position="363"/>
    </location>
</feature>
<feature type="repeat" description="LRR 16">
    <location>
        <begin position="365"/>
        <end position="386"/>
    </location>
</feature>
<feature type="repeat" description="LRR 17">
    <location>
        <begin position="387"/>
        <end position="408"/>
    </location>
</feature>
<feature type="repeat" description="LRR 18">
    <location>
        <begin position="410"/>
        <end position="432"/>
    </location>
</feature>
<feature type="repeat" description="LRR 19">
    <location>
        <begin position="433"/>
        <end position="458"/>
    </location>
</feature>
<feature type="repeat" description="LRR 20">
    <location>
        <begin position="460"/>
        <end position="478"/>
    </location>
</feature>
<name>LRRA_DICDI</name>
<protein>
    <recommendedName>
        <fullName>Leucine-rich repeat protein lrrA</fullName>
    </recommendedName>
</protein>
<comment type="function">
    <text evidence="1">Involved in cytoskeleton remodeling, which is needed for normal chemotactic aggregation and efficient cell sorting during multicellular morphogenesis.</text>
</comment>
<comment type="subcellular location">
    <subcellularLocation>
        <location evidence="1">Cytoplasm</location>
    </subcellularLocation>
</comment>
<comment type="developmental stage">
    <text evidence="1">Expressed during vegetative growth and up-regulated at early development, with a peak at 6-9 hours of the aggregation stage and then declined abruptly from 16 hours of development.</text>
</comment>
<comment type="disruption phenotype">
    <text evidence="1">Loss of function mutant is defective in the regulation of F-actin organization.</text>
</comment>
<sequence>MGGNLSSELKSTKYRKREIVDLRKMNIDKLPPTIGALQCKELLLSENDLITIPEEIGKLSKVEIIDFAKNRINYIPPEIGSLATLKQLFLSNNKLFYTPITPNIGALKNLTRLDLSSNQLDDLPVEISNCEALEYLDISDNQLQSFPLEFGKLYNLQVFNCSKNSLKSLPSEISGWVKLEELNVSNNQLAFLPNQICLLGLLSTLNVGFNKLQQLPEELSSMVSLTNLDLKVNPPLQYVPQLSNLRQLKILSIRNLQITHLPLGLGLLSELIELDIRDNPQLKEIPYDIATLINLQKLDLFGNNMRIVPREVGNLINLQTLDLRQNKLTIDNIPSEIGKLVNLKKLLLSNNLLIALPPEIASMKALKEFEASNNQLQAIPTEIGELSGLTKINLSGNKLTSIPASFGNLSELQICDLKSNEIAELPTTLDGLKSCTKIDLSHNMLTELPWEFGDLIGLTILDVGHNPLTIPPNPIVMKGTESIIQWLKKNEKEGRKGKVSGLGIQQDNEK</sequence>
<keyword id="KW-0963">Cytoplasm</keyword>
<keyword id="KW-0433">Leucine-rich repeat</keyword>
<keyword id="KW-1185">Reference proteome</keyword>
<keyword id="KW-0677">Repeat</keyword>